<organism>
    <name type="scientific">Enterobacter sp. (strain 638)</name>
    <dbReference type="NCBI Taxonomy" id="399742"/>
    <lineage>
        <taxon>Bacteria</taxon>
        <taxon>Pseudomonadati</taxon>
        <taxon>Pseudomonadota</taxon>
        <taxon>Gammaproteobacteria</taxon>
        <taxon>Enterobacterales</taxon>
        <taxon>Enterobacteriaceae</taxon>
        <taxon>Enterobacter</taxon>
    </lineage>
</organism>
<evidence type="ECO:0000255" key="1">
    <source>
        <dbReference type="HAMAP-Rule" id="MF_00831"/>
    </source>
</evidence>
<accession>A4W923</accession>
<protein>
    <recommendedName>
        <fullName evidence="1">3-aminoacrylate deaminase RutC</fullName>
        <shortName evidence="1">3-AA deaminase</shortName>
        <ecNumber evidence="1">3.5.-.-</ecNumber>
    </recommendedName>
</protein>
<sequence length="128" mass="13944">MPKSVIIPAGTSTPIAPFVPGTLADGVVYVSGTLPFDEFNNVVYPDDPKAQTRHVLETIRRVIETAGGTMEDVTFNSIFITDWKNYAAINEIYAEFFPGDKPARFCIQCGLVKPEALVEIASVAHIAK</sequence>
<name>RUTC_ENT38</name>
<dbReference type="EC" id="3.5.-.-" evidence="1"/>
<dbReference type="EMBL" id="CP000653">
    <property type="protein sequence ID" value="ABP60203.1"/>
    <property type="molecule type" value="Genomic_DNA"/>
</dbReference>
<dbReference type="RefSeq" id="WP_012016920.1">
    <property type="nucleotide sequence ID" value="NC_009436.1"/>
</dbReference>
<dbReference type="SMR" id="A4W923"/>
<dbReference type="STRING" id="399742.Ent638_1523"/>
<dbReference type="KEGG" id="ent:Ent638_1523"/>
<dbReference type="eggNOG" id="COG0251">
    <property type="taxonomic scope" value="Bacteria"/>
</dbReference>
<dbReference type="HOGENOM" id="CLU_100715_7_3_6"/>
<dbReference type="OrthoDB" id="583118at2"/>
<dbReference type="Proteomes" id="UP000000230">
    <property type="component" value="Chromosome"/>
</dbReference>
<dbReference type="GO" id="GO:0005829">
    <property type="term" value="C:cytosol"/>
    <property type="evidence" value="ECO:0007669"/>
    <property type="project" value="TreeGrafter"/>
</dbReference>
<dbReference type="GO" id="GO:0019239">
    <property type="term" value="F:deaminase activity"/>
    <property type="evidence" value="ECO:0007669"/>
    <property type="project" value="TreeGrafter"/>
</dbReference>
<dbReference type="GO" id="GO:0019740">
    <property type="term" value="P:nitrogen utilization"/>
    <property type="evidence" value="ECO:0007669"/>
    <property type="project" value="UniProtKB-UniRule"/>
</dbReference>
<dbReference type="GO" id="GO:0006212">
    <property type="term" value="P:uracil catabolic process"/>
    <property type="evidence" value="ECO:0007669"/>
    <property type="project" value="UniProtKB-UniRule"/>
</dbReference>
<dbReference type="CDD" id="cd00448">
    <property type="entry name" value="YjgF_YER057c_UK114_family"/>
    <property type="match status" value="1"/>
</dbReference>
<dbReference type="Gene3D" id="3.30.1330.40">
    <property type="entry name" value="RutC-like"/>
    <property type="match status" value="1"/>
</dbReference>
<dbReference type="HAMAP" id="MF_00831">
    <property type="entry name" value="RutC"/>
    <property type="match status" value="1"/>
</dbReference>
<dbReference type="InterPro" id="IPR019897">
    <property type="entry name" value="RidA_CS"/>
</dbReference>
<dbReference type="InterPro" id="IPR019898">
    <property type="entry name" value="RutC"/>
</dbReference>
<dbReference type="InterPro" id="IPR035959">
    <property type="entry name" value="RutC-like_sf"/>
</dbReference>
<dbReference type="InterPro" id="IPR006175">
    <property type="entry name" value="YjgF/YER057c/UK114"/>
</dbReference>
<dbReference type="NCBIfam" id="TIGR03610">
    <property type="entry name" value="RutC"/>
    <property type="match status" value="1"/>
</dbReference>
<dbReference type="PANTHER" id="PTHR11803">
    <property type="entry name" value="2-IMINOBUTANOATE/2-IMINOPROPANOATE DEAMINASE RIDA"/>
    <property type="match status" value="1"/>
</dbReference>
<dbReference type="PANTHER" id="PTHR11803:SF58">
    <property type="entry name" value="PROTEIN HMF1-RELATED"/>
    <property type="match status" value="1"/>
</dbReference>
<dbReference type="Pfam" id="PF01042">
    <property type="entry name" value="Ribonuc_L-PSP"/>
    <property type="match status" value="1"/>
</dbReference>
<dbReference type="SUPFAM" id="SSF55298">
    <property type="entry name" value="YjgF-like"/>
    <property type="match status" value="1"/>
</dbReference>
<dbReference type="PROSITE" id="PS01094">
    <property type="entry name" value="UPF0076"/>
    <property type="match status" value="1"/>
</dbReference>
<comment type="function">
    <text evidence="1">Involved in pyrimidine catabolism. Catalyzes the deamination of 3-aminoacrylate to malonic semialdehyde, a reaction that can also occur spontaneously. RutC may facilitate the reaction and modulate the metabolic fitness, rather than catalyzing essential functions.</text>
</comment>
<comment type="catalytic activity">
    <reaction evidence="1">
        <text>(Z)-3-aminoacrylate + H2O + H(+) = 3-oxopropanoate + NH4(+)</text>
        <dbReference type="Rhea" id="RHEA:34947"/>
        <dbReference type="ChEBI" id="CHEBI:15377"/>
        <dbReference type="ChEBI" id="CHEBI:15378"/>
        <dbReference type="ChEBI" id="CHEBI:28938"/>
        <dbReference type="ChEBI" id="CHEBI:33190"/>
        <dbReference type="ChEBI" id="CHEBI:59894"/>
    </reaction>
</comment>
<comment type="similarity">
    <text evidence="1">Belongs to the RutC family.</text>
</comment>
<keyword id="KW-0378">Hydrolase</keyword>
<gene>
    <name evidence="1" type="primary">rutC</name>
    <name type="ordered locus">Ent638_1523</name>
</gene>
<proteinExistence type="inferred from homology"/>
<feature type="chain" id="PRO_0000402720" description="3-aminoacrylate deaminase RutC">
    <location>
        <begin position="1"/>
        <end position="128"/>
    </location>
</feature>
<reference key="1">
    <citation type="journal article" date="2010" name="PLoS Genet.">
        <title>Genome sequence of the plant growth promoting endophytic bacterium Enterobacter sp. 638.</title>
        <authorList>
            <person name="Taghavi S."/>
            <person name="van der Lelie D."/>
            <person name="Hoffman A."/>
            <person name="Zhang Y.B."/>
            <person name="Walla M.D."/>
            <person name="Vangronsveld J."/>
            <person name="Newman L."/>
            <person name="Monchy S."/>
        </authorList>
    </citation>
    <scope>NUCLEOTIDE SEQUENCE [LARGE SCALE GENOMIC DNA]</scope>
    <source>
        <strain>638</strain>
    </source>
</reference>